<sequence length="354" mass="39364">MFLIQCLISAVIFYIQVTNALIFKGDHVSLQVNSSLTSILIPMQNDNYTEIKGQLVFIGEQLPTGTNYSGTLELLYADTVAFCFRSVQVIRYDGCPRIRTSAFISCRYKHSWHYGNSTDRISTEPDAGVMLKITKPGINDAGVYVLLVRLDHSRSTDGFILGVNVYTAGSHHNIHGVIYTSPSLQNGYSTRALFQQARLCDLPATPKGSGTSLFQHMLDLRAGKSLEDNPWLHEDVVTTETKSVVKEGIENHVYPTDMSTLPEKSLNDPPENLLIIIPIVASVMILTAMVIVIVISVKRRRIKKHPIYRPNTKTRRGIQNATPESDVMLEAAIAQLATIREESPPHSVVNPFVK</sequence>
<feature type="signal peptide" evidence="2">
    <location>
        <begin position="1"/>
        <end position="17"/>
    </location>
</feature>
<feature type="chain" id="PRO_0000038262" description="Envelope glycoprotein I">
    <location>
        <begin position="18"/>
        <end position="354"/>
    </location>
</feature>
<feature type="topological domain" description="Virion surface" evidence="2">
    <location>
        <begin position="18"/>
        <end position="295"/>
    </location>
</feature>
<feature type="transmembrane region" description="Helical" evidence="2">
    <location>
        <begin position="296"/>
        <end position="312"/>
    </location>
</feature>
<feature type="topological domain" description="Intravirion" evidence="2">
    <location>
        <begin position="313"/>
        <end position="354"/>
    </location>
</feature>
<feature type="modified residue" description="Phosphoserine" evidence="3">
    <location>
        <position position="343"/>
    </location>
</feature>
<feature type="glycosylation site" description="N-linked (GlcNAc...) asparagine; by host" evidence="2">
    <location>
        <position position="33"/>
    </location>
</feature>
<feature type="glycosylation site" description="N-linked (GlcNAc...) asparagine; by host" evidence="2">
    <location>
        <position position="47"/>
    </location>
</feature>
<feature type="glycosylation site" description="N-linked (GlcNAc...) asparagine; by host" evidence="2">
    <location>
        <position position="67"/>
    </location>
</feature>
<feature type="glycosylation site" description="N-linked (GlcNAc...) asparagine; by host" evidence="2">
    <location>
        <position position="116"/>
    </location>
</feature>
<feature type="mutagenesis site" description="No effect on phosphorylation." evidence="3">
    <original>T</original>
    <variation>A</variation>
    <location>
        <position position="338"/>
    </location>
</feature>
<feature type="mutagenesis site" description="Moderate decrease in phosphorylation." evidence="3">
    <original>EE</original>
    <variation>AA</variation>
    <location>
        <begin position="341"/>
        <end position="342"/>
    </location>
</feature>
<feature type="mutagenesis site" description="Marked decrease in phosphorylation." evidence="3">
    <original>S</original>
    <variation>A</variation>
    <location>
        <position position="343"/>
    </location>
</feature>
<feature type="mutagenesis site" description="Marked decrease in phosphorylation." evidence="3">
    <original>P</original>
    <variation>A</variation>
    <location>
        <position position="344"/>
    </location>
</feature>
<feature type="mutagenesis site" description="Decrease in phosphorylation." evidence="3">
    <original>P</original>
    <variation>A</variation>
    <location>
        <position position="345"/>
    </location>
</feature>
<comment type="function">
    <text evidence="1">In epithelial cells, the heterodimer gE/gI is required for the cell-to-cell spread of the virus, by sorting nascent virions to cell junctions. Once the virus reaches the cell junctions, virus particles can spread to adjacent cells extremely rapidly through interactions with cellular receptors that accumulate at these junctions. Implicated in basolateral spread in polarized cells. In neuronal cells, gE/gI is essential for the anterograde spread of the infection throughout the host nervous system. Together with US9, the heterodimer gE/gI is involved in the sorting and transport of viral structural components toward axon tips (By similarity).</text>
</comment>
<comment type="function">
    <text evidence="1">The heterodimer gE/gI serves as a receptor for the Fc part of human IgG. Dissociation of gE/gI from IgG occurs at acidic pH. May thus be involved in anti-VZV antibodies bipolar bridging, followed by intracellular endocytosis and degradation, thereby interfering with host Ig-mediated immune responses (By similarity).</text>
</comment>
<comment type="subunit">
    <text evidence="1">Interacts with gE; this interaction enhances the Fc receptor function of gE.</text>
</comment>
<comment type="subcellular location">
    <subcellularLocation>
        <location evidence="1">Virion membrane</location>
        <topology evidence="1">Single-pass membrane protein</topology>
    </subcellularLocation>
    <subcellularLocation>
        <location evidence="4">Host cell membrane</location>
        <topology evidence="4">Single-pass type I membrane protein</topology>
    </subcellularLocation>
    <subcellularLocation>
        <location evidence="1">Host cell junction</location>
    </subcellularLocation>
    <subcellularLocation>
        <location evidence="1">Host Golgi apparatus membrane</location>
        <topology evidence="1">Single-pass type I membrane protein</topology>
    </subcellularLocation>
    <text evidence="1">During virion morphogenesis, this protein probably accumulates in the endosomes and trans-Golgi where secondary envelopment occurs. It is probably transported to the cell surface from where it is endocytosed and directed to the trans-Golgi network (TGN). The heterodimer gE/gI then redistribute to cell junctions to promote cell-cell spread later in the infection (By similarity).</text>
</comment>
<comment type="similarity">
    <text evidence="4">Belongs to the alphaherpesvirinae glycoprotein I family.</text>
</comment>
<name>GI_VZVD</name>
<reference key="1">
    <citation type="journal article" date="1986" name="J. Gen. Virol.">
        <title>The complete DNA sequence of varicella-zoster virus.</title>
        <authorList>
            <person name="Davison A.J."/>
            <person name="Scott J.E."/>
        </authorList>
    </citation>
    <scope>NUCLEOTIDE SEQUENCE [LARGE SCALE GENOMIC DNA]</scope>
</reference>
<reference key="2">
    <citation type="journal article" date="1983" name="EMBO J.">
        <title>DNA sequence of the US component of the varicella-zoster virus genome.</title>
        <authorList>
            <person name="Davison A.J."/>
        </authorList>
    </citation>
    <scope>NUCLEOTIDE SEQUENCE [GENOMIC DNA]</scope>
</reference>
<reference key="3">
    <citation type="journal article" date="1994" name="J. Virol.">
        <title>Unusual phosphorylation sequence in the gpIV (gI) component of the varicella-zoster virus gpI-gpIV glycoprotein complex (VZV gE-gI complex).</title>
        <authorList>
            <person name="Yao Z."/>
            <person name="Grose C."/>
        </authorList>
    </citation>
    <scope>MUTAGENESIS</scope>
    <scope>PHOSPHORYLATION AT SER-343</scope>
</reference>
<organismHost>
    <name type="scientific">Homo sapiens</name>
    <name type="common">Human</name>
    <dbReference type="NCBI Taxonomy" id="9606"/>
</organismHost>
<keyword id="KW-0325">Glycoprotein</keyword>
<keyword id="KW-1031">Host cell junction</keyword>
<keyword id="KW-1032">Host cell membrane</keyword>
<keyword id="KW-1040">Host Golgi apparatus</keyword>
<keyword id="KW-1043">Host membrane</keyword>
<keyword id="KW-0945">Host-virus interaction</keyword>
<keyword id="KW-0472">Membrane</keyword>
<keyword id="KW-0597">Phosphoprotein</keyword>
<keyword id="KW-1185">Reference proteome</keyword>
<keyword id="KW-0732">Signal</keyword>
<keyword id="KW-0812">Transmembrane</keyword>
<keyword id="KW-1133">Transmembrane helix</keyword>
<keyword id="KW-0261">Viral envelope protein</keyword>
<keyword id="KW-0899">Viral immunoevasion</keyword>
<keyword id="KW-0946">Virion</keyword>
<accession>P09258</accession>
<protein>
    <recommendedName>
        <fullName>Envelope glycoprotein I</fullName>
        <shortName>gI</shortName>
    </recommendedName>
    <alternativeName>
        <fullName>Glycoprotein IV</fullName>
        <shortName>GPIV</shortName>
    </alternativeName>
</protein>
<gene>
    <name type="primary">gI</name>
    <name type="ORF">ORF67</name>
</gene>
<evidence type="ECO:0000250" key="1"/>
<evidence type="ECO:0000255" key="2"/>
<evidence type="ECO:0000269" key="3">
    <source>
    </source>
</evidence>
<evidence type="ECO:0000305" key="4"/>
<dbReference type="EMBL" id="X04370">
    <property type="protein sequence ID" value="CAA27950.1"/>
    <property type="molecule type" value="Genomic_DNA"/>
</dbReference>
<dbReference type="EMBL" id="X00208">
    <property type="protein sequence ID" value="CAA25032.1"/>
    <property type="molecule type" value="Genomic_DNA"/>
</dbReference>
<dbReference type="PIR" id="F27345">
    <property type="entry name" value="VGBE67"/>
</dbReference>
<dbReference type="RefSeq" id="NP_040189.1">
    <property type="nucleotide sequence ID" value="NC_001348.1"/>
</dbReference>
<dbReference type="BioGRID" id="971512">
    <property type="interactions" value="3"/>
</dbReference>
<dbReference type="GlyCosmos" id="P09258">
    <property type="glycosylation" value="4 sites, No reported glycans"/>
</dbReference>
<dbReference type="iPTMnet" id="P09258"/>
<dbReference type="GeneID" id="1487689"/>
<dbReference type="KEGG" id="vg:1487689"/>
<dbReference type="Proteomes" id="UP000002602">
    <property type="component" value="Genome"/>
</dbReference>
<dbReference type="GO" id="GO:0043657">
    <property type="term" value="C:host cell"/>
    <property type="evidence" value="ECO:0007669"/>
    <property type="project" value="InterPro"/>
</dbReference>
<dbReference type="GO" id="GO:0044178">
    <property type="term" value="C:host cell Golgi membrane"/>
    <property type="evidence" value="ECO:0007669"/>
    <property type="project" value="UniProtKB-SubCell"/>
</dbReference>
<dbReference type="GO" id="GO:0044156">
    <property type="term" value="C:host cell junction"/>
    <property type="evidence" value="ECO:0007669"/>
    <property type="project" value="UniProtKB-SubCell"/>
</dbReference>
<dbReference type="GO" id="GO:0016020">
    <property type="term" value="C:membrane"/>
    <property type="evidence" value="ECO:0007669"/>
    <property type="project" value="UniProtKB-KW"/>
</dbReference>
<dbReference type="GO" id="GO:0019031">
    <property type="term" value="C:viral envelope"/>
    <property type="evidence" value="ECO:0007669"/>
    <property type="project" value="UniProtKB-KW"/>
</dbReference>
<dbReference type="GO" id="GO:0055036">
    <property type="term" value="C:virion membrane"/>
    <property type="evidence" value="ECO:0007669"/>
    <property type="project" value="UniProtKB-SubCell"/>
</dbReference>
<dbReference type="InterPro" id="IPR002874">
    <property type="entry name" value="Herpes_gI"/>
</dbReference>
<dbReference type="Pfam" id="PF01688">
    <property type="entry name" value="Herpes_gI"/>
    <property type="match status" value="1"/>
</dbReference>
<proteinExistence type="evidence at protein level"/>
<organism>
    <name type="scientific">Varicella-zoster virus (strain Dumas)</name>
    <name type="common">HHV-3</name>
    <name type="synonym">Human herpesvirus 3</name>
    <dbReference type="NCBI Taxonomy" id="10338"/>
    <lineage>
        <taxon>Viruses</taxon>
        <taxon>Duplodnaviria</taxon>
        <taxon>Heunggongvirae</taxon>
        <taxon>Peploviricota</taxon>
        <taxon>Herviviricetes</taxon>
        <taxon>Herpesvirales</taxon>
        <taxon>Orthoherpesviridae</taxon>
        <taxon>Alphaherpesvirinae</taxon>
        <taxon>Varicellovirus</taxon>
        <taxon>Varicellovirus humanalpha3</taxon>
        <taxon>Human herpesvirus 3</taxon>
    </lineage>
</organism>